<proteinExistence type="inferred from homology"/>
<dbReference type="EC" id="7.1.1.2"/>
<dbReference type="EMBL" id="AJ554061">
    <property type="protein sequence ID" value="CAD88022.1"/>
    <property type="molecule type" value="Genomic_DNA"/>
</dbReference>
<dbReference type="RefSeq" id="NP_944745.1">
    <property type="nucleotide sequence ID" value="NC_005278.1"/>
</dbReference>
<dbReference type="SMR" id="Q70RQ2"/>
<dbReference type="GO" id="GO:0005743">
    <property type="term" value="C:mitochondrial inner membrane"/>
    <property type="evidence" value="ECO:0000250"/>
    <property type="project" value="UniProtKB"/>
</dbReference>
<dbReference type="GO" id="GO:0045271">
    <property type="term" value="C:respiratory chain complex I"/>
    <property type="evidence" value="ECO:0000250"/>
    <property type="project" value="UniProtKB"/>
</dbReference>
<dbReference type="GO" id="GO:0008137">
    <property type="term" value="F:NADH dehydrogenase (ubiquinone) activity"/>
    <property type="evidence" value="ECO:0000250"/>
    <property type="project" value="UniProtKB"/>
</dbReference>
<dbReference type="GO" id="GO:0042773">
    <property type="term" value="P:ATP synthesis coupled electron transport"/>
    <property type="evidence" value="ECO:0007669"/>
    <property type="project" value="InterPro"/>
</dbReference>
<dbReference type="FunFam" id="1.10.287.3510:FF:000002">
    <property type="entry name" value="NADH-ubiquinone oxidoreductase chain 4L"/>
    <property type="match status" value="1"/>
</dbReference>
<dbReference type="Gene3D" id="1.10.287.3510">
    <property type="match status" value="1"/>
</dbReference>
<dbReference type="InterPro" id="IPR001133">
    <property type="entry name" value="NADH_UbQ_OxRdtase_chain4L/K"/>
</dbReference>
<dbReference type="InterPro" id="IPR039428">
    <property type="entry name" value="NUOK/Mnh_C1-like"/>
</dbReference>
<dbReference type="PANTHER" id="PTHR11434:SF0">
    <property type="entry name" value="NADH-UBIQUINONE OXIDOREDUCTASE CHAIN 4L"/>
    <property type="match status" value="1"/>
</dbReference>
<dbReference type="PANTHER" id="PTHR11434">
    <property type="entry name" value="NADH-UBIQUINONE OXIDOREDUCTASE SUBUNIT ND4L"/>
    <property type="match status" value="1"/>
</dbReference>
<dbReference type="Pfam" id="PF00420">
    <property type="entry name" value="Oxidored_q2"/>
    <property type="match status" value="1"/>
</dbReference>
<geneLocation type="mitochondrion"/>
<feature type="chain" id="PRO_0000275034" description="NADH-ubiquinone oxidoreductase chain 4L">
    <location>
        <begin position="1"/>
        <end position="98"/>
    </location>
</feature>
<feature type="transmembrane region" description="Helical" evidence="3">
    <location>
        <begin position="1"/>
        <end position="21"/>
    </location>
</feature>
<feature type="transmembrane region" description="Helical" evidence="3">
    <location>
        <begin position="29"/>
        <end position="49"/>
    </location>
</feature>
<feature type="transmembrane region" description="Helical" evidence="3">
    <location>
        <begin position="61"/>
        <end position="81"/>
    </location>
</feature>
<sequence>MSLVHINVLIAFTVSLTGLLMYRSHLMSALLCLEGMVLSLFILAALTILNTHFTLANMMPIILLVFAACEAAIGLALLVMVSNTYGTDYVQNLNLLQC</sequence>
<gene>
    <name type="primary">MT-ND4L</name>
    <name type="synonym">MTND4L</name>
    <name type="synonym">NADH4L</name>
    <name type="synonym">ND4L</name>
</gene>
<accession>Q70RQ2</accession>
<organism>
    <name type="scientific">Lagenorhynchus albirostris</name>
    <name type="common">White-beaked dolphin</name>
    <name type="synonym">Delphinus albirostris</name>
    <dbReference type="NCBI Taxonomy" id="27610"/>
    <lineage>
        <taxon>Eukaryota</taxon>
        <taxon>Metazoa</taxon>
        <taxon>Chordata</taxon>
        <taxon>Craniata</taxon>
        <taxon>Vertebrata</taxon>
        <taxon>Euteleostomi</taxon>
        <taxon>Mammalia</taxon>
        <taxon>Eutheria</taxon>
        <taxon>Laurasiatheria</taxon>
        <taxon>Artiodactyla</taxon>
        <taxon>Whippomorpha</taxon>
        <taxon>Cetacea</taxon>
        <taxon>Odontoceti</taxon>
        <taxon>Delphinidae</taxon>
        <taxon>Lagenorhynchus</taxon>
    </lineage>
</organism>
<protein>
    <recommendedName>
        <fullName>NADH-ubiquinone oxidoreductase chain 4L</fullName>
        <ecNumber>7.1.1.2</ecNumber>
    </recommendedName>
    <alternativeName>
        <fullName>NADH dehydrogenase subunit 4L</fullName>
    </alternativeName>
</protein>
<name>NU4LM_LAGAL</name>
<reference key="1">
    <citation type="journal article" date="2004" name="Gene">
        <title>Mitogenomic analyses provide new insights into cetacean origin and evolution.</title>
        <authorList>
            <person name="Arnason U."/>
            <person name="Gullberg A."/>
            <person name="Janke A."/>
        </authorList>
    </citation>
    <scope>NUCLEOTIDE SEQUENCE [GENOMIC DNA]</scope>
</reference>
<comment type="function">
    <text evidence="1">Core subunit of the mitochondrial membrane respiratory chain NADH dehydrogenase (Complex I) which catalyzes electron transfer from NADH through the respiratory chain, using ubiquinone as an electron acceptor. Part of the enzyme membrane arm which is embedded in the lipid bilayer and involved in proton translocation.</text>
</comment>
<comment type="catalytic activity">
    <reaction evidence="1">
        <text>a ubiquinone + NADH + 5 H(+)(in) = a ubiquinol + NAD(+) + 4 H(+)(out)</text>
        <dbReference type="Rhea" id="RHEA:29091"/>
        <dbReference type="Rhea" id="RHEA-COMP:9565"/>
        <dbReference type="Rhea" id="RHEA-COMP:9566"/>
        <dbReference type="ChEBI" id="CHEBI:15378"/>
        <dbReference type="ChEBI" id="CHEBI:16389"/>
        <dbReference type="ChEBI" id="CHEBI:17976"/>
        <dbReference type="ChEBI" id="CHEBI:57540"/>
        <dbReference type="ChEBI" id="CHEBI:57945"/>
        <dbReference type="EC" id="7.1.1.2"/>
    </reaction>
    <physiologicalReaction direction="left-to-right" evidence="1">
        <dbReference type="Rhea" id="RHEA:29092"/>
    </physiologicalReaction>
</comment>
<comment type="subunit">
    <text evidence="2">Core subunit of respiratory chain NADH dehydrogenase (Complex I) which is composed of 45 different subunits.</text>
</comment>
<comment type="subcellular location">
    <subcellularLocation>
        <location evidence="2">Mitochondrion inner membrane</location>
        <topology evidence="3">Multi-pass membrane protein</topology>
    </subcellularLocation>
</comment>
<comment type="similarity">
    <text evidence="4">Belongs to the complex I subunit 4L family.</text>
</comment>
<evidence type="ECO:0000250" key="1">
    <source>
        <dbReference type="UniProtKB" id="P03901"/>
    </source>
</evidence>
<evidence type="ECO:0000250" key="2">
    <source>
        <dbReference type="UniProtKB" id="P03902"/>
    </source>
</evidence>
<evidence type="ECO:0000255" key="3"/>
<evidence type="ECO:0000305" key="4"/>
<keyword id="KW-0249">Electron transport</keyword>
<keyword id="KW-0472">Membrane</keyword>
<keyword id="KW-0496">Mitochondrion</keyword>
<keyword id="KW-0999">Mitochondrion inner membrane</keyword>
<keyword id="KW-0520">NAD</keyword>
<keyword id="KW-0679">Respiratory chain</keyword>
<keyword id="KW-1278">Translocase</keyword>
<keyword id="KW-0812">Transmembrane</keyword>
<keyword id="KW-1133">Transmembrane helix</keyword>
<keyword id="KW-0813">Transport</keyword>
<keyword id="KW-0830">Ubiquinone</keyword>